<sequence length="146" mass="16683">MPYTDVVIHEIQRLVDIVPMGVPHNIIQDTQFRGYLLPKGTDVFPLLGSVLKDPKYFRYPDAFYPQHFLDEQGRFKKNEAFVPFSSGKRICLGEAMARMELFLYFTSTLQNFSLCSLVPLVDIDITPKLSGFGNITPTYELCLVAR</sequence>
<reference key="1">
    <citation type="journal article" date="2004" name="Nat. Genet.">
        <title>Complete sequencing and characterization of 21,243 full-length human cDNAs.</title>
        <authorList>
            <person name="Ota T."/>
            <person name="Suzuki Y."/>
            <person name="Nishikawa T."/>
            <person name="Otsuki T."/>
            <person name="Sugiyama T."/>
            <person name="Irie R."/>
            <person name="Wakamatsu A."/>
            <person name="Hayashi K."/>
            <person name="Sato H."/>
            <person name="Nagai K."/>
            <person name="Kimura K."/>
            <person name="Makita H."/>
            <person name="Sekine M."/>
            <person name="Obayashi M."/>
            <person name="Nishi T."/>
            <person name="Shibahara T."/>
            <person name="Tanaka T."/>
            <person name="Ishii S."/>
            <person name="Yamamoto J."/>
            <person name="Saito K."/>
            <person name="Kawai Y."/>
            <person name="Isono Y."/>
            <person name="Nakamura Y."/>
            <person name="Nagahari K."/>
            <person name="Murakami K."/>
            <person name="Yasuda T."/>
            <person name="Iwayanagi T."/>
            <person name="Wagatsuma M."/>
            <person name="Shiratori A."/>
            <person name="Sudo H."/>
            <person name="Hosoiri T."/>
            <person name="Kaku Y."/>
            <person name="Kodaira H."/>
            <person name="Kondo H."/>
            <person name="Sugawara M."/>
            <person name="Takahashi M."/>
            <person name="Kanda K."/>
            <person name="Yokoi T."/>
            <person name="Furuya T."/>
            <person name="Kikkawa E."/>
            <person name="Omura Y."/>
            <person name="Abe K."/>
            <person name="Kamihara K."/>
            <person name="Katsuta N."/>
            <person name="Sato K."/>
            <person name="Tanikawa M."/>
            <person name="Yamazaki M."/>
            <person name="Ninomiya K."/>
            <person name="Ishibashi T."/>
            <person name="Yamashita H."/>
            <person name="Murakawa K."/>
            <person name="Fujimori K."/>
            <person name="Tanai H."/>
            <person name="Kimata M."/>
            <person name="Watanabe M."/>
            <person name="Hiraoka S."/>
            <person name="Chiba Y."/>
            <person name="Ishida S."/>
            <person name="Ono Y."/>
            <person name="Takiguchi S."/>
            <person name="Watanabe S."/>
            <person name="Yosida M."/>
            <person name="Hotuta T."/>
            <person name="Kusano J."/>
            <person name="Kanehori K."/>
            <person name="Takahashi-Fujii A."/>
            <person name="Hara H."/>
            <person name="Tanase T.-O."/>
            <person name="Nomura Y."/>
            <person name="Togiya S."/>
            <person name="Komai F."/>
            <person name="Hara R."/>
            <person name="Takeuchi K."/>
            <person name="Arita M."/>
            <person name="Imose N."/>
            <person name="Musashino K."/>
            <person name="Yuuki H."/>
            <person name="Oshima A."/>
            <person name="Sasaki N."/>
            <person name="Aotsuka S."/>
            <person name="Yoshikawa Y."/>
            <person name="Matsunawa H."/>
            <person name="Ichihara T."/>
            <person name="Shiohata N."/>
            <person name="Sano S."/>
            <person name="Moriya S."/>
            <person name="Momiyama H."/>
            <person name="Satoh N."/>
            <person name="Takami S."/>
            <person name="Terashima Y."/>
            <person name="Suzuki O."/>
            <person name="Nakagawa S."/>
            <person name="Senoh A."/>
            <person name="Mizoguchi H."/>
            <person name="Goto Y."/>
            <person name="Shimizu F."/>
            <person name="Wakebe H."/>
            <person name="Hishigaki H."/>
            <person name="Watanabe T."/>
            <person name="Sugiyama A."/>
            <person name="Takemoto M."/>
            <person name="Kawakami B."/>
            <person name="Yamazaki M."/>
            <person name="Watanabe K."/>
            <person name="Kumagai A."/>
            <person name="Itakura S."/>
            <person name="Fukuzumi Y."/>
            <person name="Fujimori Y."/>
            <person name="Komiyama M."/>
            <person name="Tashiro H."/>
            <person name="Tanigami A."/>
            <person name="Fujiwara T."/>
            <person name="Ono T."/>
            <person name="Yamada K."/>
            <person name="Fujii Y."/>
            <person name="Ozaki K."/>
            <person name="Hirao M."/>
            <person name="Ohmori Y."/>
            <person name="Kawabata A."/>
            <person name="Hikiji T."/>
            <person name="Kobatake N."/>
            <person name="Inagaki H."/>
            <person name="Ikema Y."/>
            <person name="Okamoto S."/>
            <person name="Okitani R."/>
            <person name="Kawakami T."/>
            <person name="Noguchi S."/>
            <person name="Itoh T."/>
            <person name="Shigeta K."/>
            <person name="Senba T."/>
            <person name="Matsumura K."/>
            <person name="Nakajima Y."/>
            <person name="Mizuno T."/>
            <person name="Morinaga M."/>
            <person name="Sasaki M."/>
            <person name="Togashi T."/>
            <person name="Oyama M."/>
            <person name="Hata H."/>
            <person name="Watanabe M."/>
            <person name="Komatsu T."/>
            <person name="Mizushima-Sugano J."/>
            <person name="Satoh T."/>
            <person name="Shirai Y."/>
            <person name="Takahashi Y."/>
            <person name="Nakagawa K."/>
            <person name="Okumura K."/>
            <person name="Nagase T."/>
            <person name="Nomura N."/>
            <person name="Kikuchi H."/>
            <person name="Masuho Y."/>
            <person name="Yamashita R."/>
            <person name="Nakai K."/>
            <person name="Yada T."/>
            <person name="Nakamura Y."/>
            <person name="Ohara O."/>
            <person name="Isogai T."/>
            <person name="Sugano S."/>
        </authorList>
    </citation>
    <scope>NUCLEOTIDE SEQUENCE [LARGE SCALE MRNA]</scope>
    <source>
        <tissue>Caudate nucleus</tissue>
    </source>
</reference>
<reference key="2">
    <citation type="journal article" date="2000" name="Pharmacogenetics">
        <title>Characterization of human CYP2G genes: widespread loss-of-function mutations and genetic polymorphism.</title>
        <authorList>
            <person name="Sheng J."/>
            <person name="Guo J."/>
            <person name="Hua Z."/>
            <person name="Caggana M."/>
            <person name="Ding X."/>
        </authorList>
    </citation>
    <scope>IDENTIFICATION</scope>
</reference>
<comment type="cofactor">
    <cofactor evidence="1">
        <name>heme</name>
        <dbReference type="ChEBI" id="CHEBI:30413"/>
    </cofactor>
</comment>
<comment type="similarity">
    <text evidence="2">Belongs to the cytochrome P450 family.</text>
</comment>
<comment type="caution">
    <text evidence="2">Could be the product of a pseudogene. Probable pseudogene which is probably not functional. However, according to PubMed:11186129, some individuals may have an allele allowing the expression of a functional protein with an extended N-terminus.</text>
</comment>
<name>C2G1P_HUMAN</name>
<keyword id="KW-0349">Heme</keyword>
<keyword id="KW-0408">Iron</keyword>
<keyword id="KW-0479">Metal-binding</keyword>
<keyword id="KW-1185">Reference proteome</keyword>
<protein>
    <recommendedName>
        <fullName>Putative inactive cytochrome P450 2G1</fullName>
    </recommendedName>
    <alternativeName>
        <fullName>Cytochrome P450 2G1 pseudogene</fullName>
    </alternativeName>
</protein>
<feature type="chain" id="PRO_0000341351" description="Putative inactive cytochrome P450 2G1">
    <location>
        <begin position="1"/>
        <end position="146"/>
    </location>
</feature>
<feature type="binding site" description="axial binding residue" evidence="1">
    <location>
        <position position="91"/>
    </location>
    <ligand>
        <name>heme</name>
        <dbReference type="ChEBI" id="CHEBI:30413"/>
    </ligand>
    <ligandPart>
        <name>Fe</name>
        <dbReference type="ChEBI" id="CHEBI:18248"/>
    </ligandPart>
</feature>
<dbReference type="EMBL" id="AK127151">
    <property type="protein sequence ID" value="BAC86855.1"/>
    <property type="molecule type" value="mRNA"/>
</dbReference>
<dbReference type="SMR" id="Q6ZSU1"/>
<dbReference type="FunCoup" id="Q6ZSU1">
    <property type="interactions" value="2"/>
</dbReference>
<dbReference type="BioMuta" id="HGNC:2633"/>
<dbReference type="MassIVE" id="Q6ZSU1"/>
<dbReference type="AGR" id="HGNC:2633"/>
<dbReference type="GeneCards" id="CYP2G1P"/>
<dbReference type="HGNC" id="HGNC:2633">
    <property type="gene designation" value="CYP2G1P"/>
</dbReference>
<dbReference type="MIM" id="601133">
    <property type="type" value="gene"/>
</dbReference>
<dbReference type="neXtProt" id="NX_Q6ZSU1"/>
<dbReference type="InParanoid" id="Q6ZSU1"/>
<dbReference type="PAN-GO" id="Q6ZSU1">
    <property type="GO annotations" value="8 GO annotations based on evolutionary models"/>
</dbReference>
<dbReference type="PhylomeDB" id="Q6ZSU1"/>
<dbReference type="PathwayCommons" id="Q6ZSU1"/>
<dbReference type="Pharos" id="Q6ZSU1">
    <property type="development level" value="Tdark"/>
</dbReference>
<dbReference type="Proteomes" id="UP000005640">
    <property type="component" value="Unplaced"/>
</dbReference>
<dbReference type="RNAct" id="Q6ZSU1">
    <property type="molecule type" value="protein"/>
</dbReference>
<dbReference type="GO" id="GO:0020037">
    <property type="term" value="F:heme binding"/>
    <property type="evidence" value="ECO:0007669"/>
    <property type="project" value="InterPro"/>
</dbReference>
<dbReference type="GO" id="GO:0005506">
    <property type="term" value="F:iron ion binding"/>
    <property type="evidence" value="ECO:0007669"/>
    <property type="project" value="InterPro"/>
</dbReference>
<dbReference type="GO" id="GO:0004497">
    <property type="term" value="F:monooxygenase activity"/>
    <property type="evidence" value="ECO:0007669"/>
    <property type="project" value="InterPro"/>
</dbReference>
<dbReference type="GO" id="GO:0016705">
    <property type="term" value="F:oxidoreductase activity, acting on paired donors, with incorporation or reduction of molecular oxygen"/>
    <property type="evidence" value="ECO:0007669"/>
    <property type="project" value="InterPro"/>
</dbReference>
<dbReference type="FunFam" id="1.10.630.10:FF:000219">
    <property type="entry name" value="Putative inactive cytochrome P450 2G1"/>
    <property type="match status" value="1"/>
</dbReference>
<dbReference type="Gene3D" id="1.10.630.10">
    <property type="entry name" value="Cytochrome P450"/>
    <property type="match status" value="1"/>
</dbReference>
<dbReference type="InterPro" id="IPR001128">
    <property type="entry name" value="Cyt_P450"/>
</dbReference>
<dbReference type="InterPro" id="IPR017972">
    <property type="entry name" value="Cyt_P450_CS"/>
</dbReference>
<dbReference type="InterPro" id="IPR002401">
    <property type="entry name" value="Cyt_P450_E_grp-I"/>
</dbReference>
<dbReference type="InterPro" id="IPR036396">
    <property type="entry name" value="Cyt_P450_sf"/>
</dbReference>
<dbReference type="InterPro" id="IPR050182">
    <property type="entry name" value="Cytochrome_P450_fam2"/>
</dbReference>
<dbReference type="PANTHER" id="PTHR24300:SF424">
    <property type="entry name" value="CYTOCHROME P450"/>
    <property type="match status" value="1"/>
</dbReference>
<dbReference type="PANTHER" id="PTHR24300">
    <property type="entry name" value="CYTOCHROME P450 508A4-RELATED"/>
    <property type="match status" value="1"/>
</dbReference>
<dbReference type="Pfam" id="PF00067">
    <property type="entry name" value="p450"/>
    <property type="match status" value="1"/>
</dbReference>
<dbReference type="PRINTS" id="PR00463">
    <property type="entry name" value="EP450I"/>
</dbReference>
<dbReference type="PRINTS" id="PR00385">
    <property type="entry name" value="P450"/>
</dbReference>
<dbReference type="SUPFAM" id="SSF48264">
    <property type="entry name" value="Cytochrome P450"/>
    <property type="match status" value="1"/>
</dbReference>
<dbReference type="PROSITE" id="PS00086">
    <property type="entry name" value="CYTOCHROME_P450"/>
    <property type="match status" value="1"/>
</dbReference>
<evidence type="ECO:0000250" key="1"/>
<evidence type="ECO:0000305" key="2"/>
<proteinExistence type="uncertain"/>
<accession>Q6ZSU1</accession>
<organism>
    <name type="scientific">Homo sapiens</name>
    <name type="common">Human</name>
    <dbReference type="NCBI Taxonomy" id="9606"/>
    <lineage>
        <taxon>Eukaryota</taxon>
        <taxon>Metazoa</taxon>
        <taxon>Chordata</taxon>
        <taxon>Craniata</taxon>
        <taxon>Vertebrata</taxon>
        <taxon>Euteleostomi</taxon>
        <taxon>Mammalia</taxon>
        <taxon>Eutheria</taxon>
        <taxon>Euarchontoglires</taxon>
        <taxon>Primates</taxon>
        <taxon>Haplorrhini</taxon>
        <taxon>Catarrhini</taxon>
        <taxon>Hominidae</taxon>
        <taxon>Homo</taxon>
    </lineage>
</organism>
<gene>
    <name type="primary">CYP2G1P</name>
    <name type="synonym">CYP2GP1</name>
</gene>